<sequence length="321" mass="35108">MAKQSGADRELVIGSRGSILALWQAEYIKSCLKAQCGLQSRIQIIKTRGDKILDVPLAKIGGKGLFTKELEEMLLSKDIDLAVHSLKDVPVEFVPELDLAAITQRESANDCFLSVNYPNLNALPQGAKVGTTSLRRSMQIKKYRSDLDTLSLRGNVQTRLEKLHNGAFDAIILAQAGVNRLKINTQDVRYIVPLDFMIPAMGQGALGIEMRKDSIFFDRIAVLNDKQSALCVSAERAFVRTLEGGCQVPIGVYAQFSNNKLTLQAIVGLPDGSEVLQDSVEDSINIDDINASENLGIAFAQKFIDKGAKELLERAAKIAFA</sequence>
<dbReference type="EC" id="2.5.1.61" evidence="1"/>
<dbReference type="EMBL" id="AE017125">
    <property type="protein sequence ID" value="AAP78324.1"/>
    <property type="molecule type" value="Genomic_DNA"/>
</dbReference>
<dbReference type="RefSeq" id="WP_011116566.1">
    <property type="nucleotide sequence ID" value="NC_004917.1"/>
</dbReference>
<dbReference type="SMR" id="Q7VFE9"/>
<dbReference type="STRING" id="235279.HH_1727"/>
<dbReference type="KEGG" id="hhe:HH_1727"/>
<dbReference type="eggNOG" id="COG0181">
    <property type="taxonomic scope" value="Bacteria"/>
</dbReference>
<dbReference type="HOGENOM" id="CLU_019704_0_2_7"/>
<dbReference type="OrthoDB" id="9810298at2"/>
<dbReference type="UniPathway" id="UPA00251">
    <property type="reaction ID" value="UER00319"/>
</dbReference>
<dbReference type="Proteomes" id="UP000002495">
    <property type="component" value="Chromosome"/>
</dbReference>
<dbReference type="GO" id="GO:0005737">
    <property type="term" value="C:cytoplasm"/>
    <property type="evidence" value="ECO:0007669"/>
    <property type="project" value="TreeGrafter"/>
</dbReference>
<dbReference type="GO" id="GO:0004418">
    <property type="term" value="F:hydroxymethylbilane synthase activity"/>
    <property type="evidence" value="ECO:0007669"/>
    <property type="project" value="UniProtKB-UniRule"/>
</dbReference>
<dbReference type="GO" id="GO:0006782">
    <property type="term" value="P:protoporphyrinogen IX biosynthetic process"/>
    <property type="evidence" value="ECO:0007669"/>
    <property type="project" value="UniProtKB-UniRule"/>
</dbReference>
<dbReference type="CDD" id="cd13646">
    <property type="entry name" value="PBP2_EcHMBS_like"/>
    <property type="match status" value="1"/>
</dbReference>
<dbReference type="FunFam" id="3.30.160.40:FF:000002">
    <property type="entry name" value="Porphobilinogen deaminase"/>
    <property type="match status" value="1"/>
</dbReference>
<dbReference type="FunFam" id="3.40.190.10:FF:000004">
    <property type="entry name" value="Porphobilinogen deaminase"/>
    <property type="match status" value="1"/>
</dbReference>
<dbReference type="FunFam" id="3.40.190.10:FF:000005">
    <property type="entry name" value="Porphobilinogen deaminase"/>
    <property type="match status" value="1"/>
</dbReference>
<dbReference type="Gene3D" id="3.40.190.10">
    <property type="entry name" value="Periplasmic binding protein-like II"/>
    <property type="match status" value="2"/>
</dbReference>
<dbReference type="Gene3D" id="3.30.160.40">
    <property type="entry name" value="Porphobilinogen deaminase, C-terminal domain"/>
    <property type="match status" value="1"/>
</dbReference>
<dbReference type="HAMAP" id="MF_00260">
    <property type="entry name" value="Porphobil_deam"/>
    <property type="match status" value="1"/>
</dbReference>
<dbReference type="InterPro" id="IPR000860">
    <property type="entry name" value="HemC"/>
</dbReference>
<dbReference type="InterPro" id="IPR022419">
    <property type="entry name" value="Porphobilin_deaminase_cofac_BS"/>
</dbReference>
<dbReference type="InterPro" id="IPR022417">
    <property type="entry name" value="Porphobilin_deaminase_N"/>
</dbReference>
<dbReference type="InterPro" id="IPR022418">
    <property type="entry name" value="Porphobilinogen_deaminase_C"/>
</dbReference>
<dbReference type="InterPro" id="IPR036803">
    <property type="entry name" value="Porphobilinogen_deaminase_C_sf"/>
</dbReference>
<dbReference type="NCBIfam" id="TIGR00212">
    <property type="entry name" value="hemC"/>
    <property type="match status" value="1"/>
</dbReference>
<dbReference type="PANTHER" id="PTHR11557">
    <property type="entry name" value="PORPHOBILINOGEN DEAMINASE"/>
    <property type="match status" value="1"/>
</dbReference>
<dbReference type="PANTHER" id="PTHR11557:SF0">
    <property type="entry name" value="PORPHOBILINOGEN DEAMINASE"/>
    <property type="match status" value="1"/>
</dbReference>
<dbReference type="Pfam" id="PF01379">
    <property type="entry name" value="Porphobil_deam"/>
    <property type="match status" value="1"/>
</dbReference>
<dbReference type="Pfam" id="PF03900">
    <property type="entry name" value="Porphobil_deamC"/>
    <property type="match status" value="1"/>
</dbReference>
<dbReference type="PIRSF" id="PIRSF001438">
    <property type="entry name" value="4pyrrol_synth_OHMeBilane_synth"/>
    <property type="match status" value="1"/>
</dbReference>
<dbReference type="PRINTS" id="PR00151">
    <property type="entry name" value="PORPHBDMNASE"/>
</dbReference>
<dbReference type="SUPFAM" id="SSF53850">
    <property type="entry name" value="Periplasmic binding protein-like II"/>
    <property type="match status" value="1"/>
</dbReference>
<dbReference type="SUPFAM" id="SSF54782">
    <property type="entry name" value="Porphobilinogen deaminase (hydroxymethylbilane synthase), C-terminal domain"/>
    <property type="match status" value="1"/>
</dbReference>
<dbReference type="PROSITE" id="PS00533">
    <property type="entry name" value="PORPHOBILINOGEN_DEAM"/>
    <property type="match status" value="1"/>
</dbReference>
<evidence type="ECO:0000255" key="1">
    <source>
        <dbReference type="HAMAP-Rule" id="MF_00260"/>
    </source>
</evidence>
<name>HEM3_HELHP</name>
<organism>
    <name type="scientific">Helicobacter hepaticus (strain ATCC 51449 / 3B1)</name>
    <dbReference type="NCBI Taxonomy" id="235279"/>
    <lineage>
        <taxon>Bacteria</taxon>
        <taxon>Pseudomonadati</taxon>
        <taxon>Campylobacterota</taxon>
        <taxon>Epsilonproteobacteria</taxon>
        <taxon>Campylobacterales</taxon>
        <taxon>Helicobacteraceae</taxon>
        <taxon>Helicobacter</taxon>
    </lineage>
</organism>
<protein>
    <recommendedName>
        <fullName evidence="1">Porphobilinogen deaminase</fullName>
        <shortName evidence="1">PBG</shortName>
        <ecNumber evidence="1">2.5.1.61</ecNumber>
    </recommendedName>
    <alternativeName>
        <fullName evidence="1">Hydroxymethylbilane synthase</fullName>
        <shortName evidence="1">HMBS</shortName>
    </alternativeName>
    <alternativeName>
        <fullName evidence="1">Pre-uroporphyrinogen synthase</fullName>
    </alternativeName>
</protein>
<comment type="function">
    <text evidence="1">Tetrapolymerization of the monopyrrole PBG into the hydroxymethylbilane pre-uroporphyrinogen in several discrete steps.</text>
</comment>
<comment type="catalytic activity">
    <reaction evidence="1">
        <text>4 porphobilinogen + H2O = hydroxymethylbilane + 4 NH4(+)</text>
        <dbReference type="Rhea" id="RHEA:13185"/>
        <dbReference type="ChEBI" id="CHEBI:15377"/>
        <dbReference type="ChEBI" id="CHEBI:28938"/>
        <dbReference type="ChEBI" id="CHEBI:57845"/>
        <dbReference type="ChEBI" id="CHEBI:58126"/>
        <dbReference type="EC" id="2.5.1.61"/>
    </reaction>
</comment>
<comment type="cofactor">
    <cofactor evidence="1">
        <name>dipyrromethane</name>
        <dbReference type="ChEBI" id="CHEBI:60342"/>
    </cofactor>
    <text evidence="1">Binds 1 dipyrromethane group covalently.</text>
</comment>
<comment type="pathway">
    <text evidence="1">Porphyrin-containing compound metabolism; protoporphyrin-IX biosynthesis; coproporphyrinogen-III from 5-aminolevulinate: step 2/4.</text>
</comment>
<comment type="subunit">
    <text evidence="1">Monomer.</text>
</comment>
<comment type="miscellaneous">
    <text evidence="1">The porphobilinogen subunits are added to the dipyrromethane group.</text>
</comment>
<comment type="similarity">
    <text evidence="1">Belongs to the HMBS family.</text>
</comment>
<keyword id="KW-0627">Porphyrin biosynthesis</keyword>
<keyword id="KW-1185">Reference proteome</keyword>
<keyword id="KW-0808">Transferase</keyword>
<proteinExistence type="inferred from homology"/>
<accession>Q7VFE9</accession>
<feature type="chain" id="PRO_0000142944" description="Porphobilinogen deaminase">
    <location>
        <begin position="1"/>
        <end position="321"/>
    </location>
</feature>
<feature type="modified residue" description="S-(dipyrrolylmethanemethyl)cysteine" evidence="1">
    <location>
        <position position="246"/>
    </location>
</feature>
<gene>
    <name evidence="1" type="primary">hemC</name>
    <name type="ordered locus">HH_1727</name>
</gene>
<reference key="1">
    <citation type="journal article" date="2003" name="Proc. Natl. Acad. Sci. U.S.A.">
        <title>The complete genome sequence of the carcinogenic bacterium Helicobacter hepaticus.</title>
        <authorList>
            <person name="Suerbaum S."/>
            <person name="Josenhans C."/>
            <person name="Sterzenbach T."/>
            <person name="Drescher B."/>
            <person name="Brandt P."/>
            <person name="Bell M."/>
            <person name="Droege M."/>
            <person name="Fartmann B."/>
            <person name="Fischer H.-P."/>
            <person name="Ge Z."/>
            <person name="Hoerster A."/>
            <person name="Holland R."/>
            <person name="Klein K."/>
            <person name="Koenig J."/>
            <person name="Macko L."/>
            <person name="Mendz G.L."/>
            <person name="Nyakatura G."/>
            <person name="Schauer D.B."/>
            <person name="Shen Z."/>
            <person name="Weber J."/>
            <person name="Frosch M."/>
            <person name="Fox J.G."/>
        </authorList>
    </citation>
    <scope>NUCLEOTIDE SEQUENCE [LARGE SCALE GENOMIC DNA]</scope>
    <source>
        <strain>ATCC 51449 / 3B1</strain>
    </source>
</reference>